<accession>B2JYQ0</accession>
<reference key="1">
    <citation type="submission" date="2008-04" db="EMBL/GenBank/DDBJ databases">
        <title>Complete sequence of Yersinia pseudotuberculosis PB1/+.</title>
        <authorList>
            <person name="Copeland A."/>
            <person name="Lucas S."/>
            <person name="Lapidus A."/>
            <person name="Glavina del Rio T."/>
            <person name="Dalin E."/>
            <person name="Tice H."/>
            <person name="Bruce D."/>
            <person name="Goodwin L."/>
            <person name="Pitluck S."/>
            <person name="Munk A.C."/>
            <person name="Brettin T."/>
            <person name="Detter J.C."/>
            <person name="Han C."/>
            <person name="Tapia R."/>
            <person name="Schmutz J."/>
            <person name="Larimer F."/>
            <person name="Land M."/>
            <person name="Hauser L."/>
            <person name="Challacombe J.F."/>
            <person name="Green L."/>
            <person name="Lindler L.E."/>
            <person name="Nikolich M.P."/>
            <person name="Richardson P."/>
        </authorList>
    </citation>
    <scope>NUCLEOTIDE SEQUENCE [LARGE SCALE GENOMIC DNA]</scope>
    <source>
        <strain>PB1/+</strain>
    </source>
</reference>
<evidence type="ECO:0000255" key="1">
    <source>
        <dbReference type="HAMAP-Rule" id="MF_00821"/>
    </source>
</evidence>
<organism>
    <name type="scientific">Yersinia pseudotuberculosis serotype IB (strain PB1/+)</name>
    <dbReference type="NCBI Taxonomy" id="502801"/>
    <lineage>
        <taxon>Bacteria</taxon>
        <taxon>Pseudomonadati</taxon>
        <taxon>Pseudomonadota</taxon>
        <taxon>Gammaproteobacteria</taxon>
        <taxon>Enterobacterales</taxon>
        <taxon>Yersiniaceae</taxon>
        <taxon>Yersinia</taxon>
    </lineage>
</organism>
<gene>
    <name evidence="1" type="primary">secB</name>
    <name type="ordered locus">YPTS_0065</name>
</gene>
<protein>
    <recommendedName>
        <fullName evidence="1">Protein-export protein SecB</fullName>
    </recommendedName>
</protein>
<sequence length="158" mass="17576">MSEQNNTEMAFQIQRIYTKDISFEAPNAPQVFQQDWQPEVKLDLDTASSQLAEDVYEVVLRVTVTASLGEETAFLCEVQQGGIFSVAGIEGTQLAHCLGAYCPNILFPYARECITSLVSRGTFPQLNLAPVNFDALFMNYLQQQAEGEVEGVEQRQDA</sequence>
<name>SECB_YERPB</name>
<proteinExistence type="inferred from homology"/>
<comment type="function">
    <text evidence="1">One of the proteins required for the normal export of preproteins out of the cell cytoplasm. It is a molecular chaperone that binds to a subset of precursor proteins, maintaining them in a translocation-competent state. It also specifically binds to its receptor SecA.</text>
</comment>
<comment type="subunit">
    <text evidence="1">Homotetramer, a dimer of dimers. One homotetramer interacts with 1 SecA dimer.</text>
</comment>
<comment type="subcellular location">
    <subcellularLocation>
        <location evidence="1">Cytoplasm</location>
    </subcellularLocation>
</comment>
<comment type="similarity">
    <text evidence="1">Belongs to the SecB family.</text>
</comment>
<dbReference type="EMBL" id="CP001048">
    <property type="protein sequence ID" value="ACC87064.1"/>
    <property type="molecule type" value="Genomic_DNA"/>
</dbReference>
<dbReference type="RefSeq" id="WP_002208976.1">
    <property type="nucleotide sequence ID" value="NZ_CP009780.1"/>
</dbReference>
<dbReference type="SMR" id="B2JYQ0"/>
<dbReference type="GeneID" id="96663547"/>
<dbReference type="KEGG" id="ypb:YPTS_0065"/>
<dbReference type="PATRIC" id="fig|502801.10.peg.3741"/>
<dbReference type="GO" id="GO:0005737">
    <property type="term" value="C:cytoplasm"/>
    <property type="evidence" value="ECO:0007669"/>
    <property type="project" value="UniProtKB-SubCell"/>
</dbReference>
<dbReference type="GO" id="GO:0051082">
    <property type="term" value="F:unfolded protein binding"/>
    <property type="evidence" value="ECO:0007669"/>
    <property type="project" value="InterPro"/>
</dbReference>
<dbReference type="GO" id="GO:0006457">
    <property type="term" value="P:protein folding"/>
    <property type="evidence" value="ECO:0007669"/>
    <property type="project" value="UniProtKB-UniRule"/>
</dbReference>
<dbReference type="GO" id="GO:0051262">
    <property type="term" value="P:protein tetramerization"/>
    <property type="evidence" value="ECO:0007669"/>
    <property type="project" value="InterPro"/>
</dbReference>
<dbReference type="GO" id="GO:0015031">
    <property type="term" value="P:protein transport"/>
    <property type="evidence" value="ECO:0007669"/>
    <property type="project" value="UniProtKB-UniRule"/>
</dbReference>
<dbReference type="CDD" id="cd00557">
    <property type="entry name" value="Translocase_SecB"/>
    <property type="match status" value="1"/>
</dbReference>
<dbReference type="FunFam" id="3.10.420.10:FF:000001">
    <property type="entry name" value="Protein-export chaperone SecB"/>
    <property type="match status" value="1"/>
</dbReference>
<dbReference type="Gene3D" id="3.10.420.10">
    <property type="entry name" value="SecB-like"/>
    <property type="match status" value="1"/>
</dbReference>
<dbReference type="HAMAP" id="MF_00821">
    <property type="entry name" value="SecB"/>
    <property type="match status" value="1"/>
</dbReference>
<dbReference type="InterPro" id="IPR003708">
    <property type="entry name" value="SecB"/>
</dbReference>
<dbReference type="InterPro" id="IPR035958">
    <property type="entry name" value="SecB-like_sf"/>
</dbReference>
<dbReference type="NCBIfam" id="NF004390">
    <property type="entry name" value="PRK05751.1-1"/>
    <property type="match status" value="1"/>
</dbReference>
<dbReference type="NCBIfam" id="NF004393">
    <property type="entry name" value="PRK05751.1-4"/>
    <property type="match status" value="1"/>
</dbReference>
<dbReference type="NCBIfam" id="TIGR00809">
    <property type="entry name" value="secB"/>
    <property type="match status" value="1"/>
</dbReference>
<dbReference type="PANTHER" id="PTHR36918">
    <property type="match status" value="1"/>
</dbReference>
<dbReference type="PANTHER" id="PTHR36918:SF1">
    <property type="entry name" value="PROTEIN-EXPORT PROTEIN SECB"/>
    <property type="match status" value="1"/>
</dbReference>
<dbReference type="Pfam" id="PF02556">
    <property type="entry name" value="SecB"/>
    <property type="match status" value="1"/>
</dbReference>
<dbReference type="PRINTS" id="PR01594">
    <property type="entry name" value="SECBCHAPRONE"/>
</dbReference>
<dbReference type="SUPFAM" id="SSF54611">
    <property type="entry name" value="SecB-like"/>
    <property type="match status" value="1"/>
</dbReference>
<feature type="chain" id="PRO_1000134419" description="Protein-export protein SecB">
    <location>
        <begin position="1"/>
        <end position="158"/>
    </location>
</feature>
<keyword id="KW-0143">Chaperone</keyword>
<keyword id="KW-0963">Cytoplasm</keyword>
<keyword id="KW-0653">Protein transport</keyword>
<keyword id="KW-0811">Translocation</keyword>
<keyword id="KW-0813">Transport</keyword>